<proteinExistence type="inferred from homology"/>
<feature type="chain" id="PRO_1000006255" description="Serine hydroxymethyltransferase">
    <location>
        <begin position="1"/>
        <end position="417"/>
    </location>
</feature>
<feature type="binding site" evidence="1">
    <location>
        <position position="122"/>
    </location>
    <ligand>
        <name>(6S)-5,6,7,8-tetrahydrofolate</name>
        <dbReference type="ChEBI" id="CHEBI:57453"/>
    </ligand>
</feature>
<feature type="binding site" evidence="1">
    <location>
        <begin position="126"/>
        <end position="128"/>
    </location>
    <ligand>
        <name>(6S)-5,6,7,8-tetrahydrofolate</name>
        <dbReference type="ChEBI" id="CHEBI:57453"/>
    </ligand>
</feature>
<feature type="binding site" evidence="1">
    <location>
        <begin position="355"/>
        <end position="357"/>
    </location>
    <ligand>
        <name>(6S)-5,6,7,8-tetrahydrofolate</name>
        <dbReference type="ChEBI" id="CHEBI:57453"/>
    </ligand>
</feature>
<feature type="site" description="Plays an important role in substrate specificity" evidence="1">
    <location>
        <position position="229"/>
    </location>
</feature>
<feature type="modified residue" description="N6-(pyridoxal phosphate)lysine" evidence="1">
    <location>
        <position position="230"/>
    </location>
</feature>
<protein>
    <recommendedName>
        <fullName evidence="1">Serine hydroxymethyltransferase</fullName>
        <shortName evidence="1">SHMT</shortName>
        <shortName evidence="1">Serine methylase</shortName>
        <ecNumber evidence="1">2.1.2.1</ecNumber>
    </recommendedName>
</protein>
<sequence length="417" mass="45316">MFSFEKNSLKNTDKEIFDAIELEVKRQHEHVELIASENYASPAVMEAQGSQLTNKYAEGYHGKRYYGGCEFVDIAEKLAIERAQQLFGVDYANVQPHSGSQANAAVYNAVLKPGDTVLGMDLGAGGHLTHGSKVNFSGKIYNSIQYGLDENGDIDYKQVAQLAKEHKPKMIIAGFSAFSGIINWQKFREIADSVDAVLMADIAHVAGLVAAGVYPNPFPYVYVATTTTHKTLRGPRGGLILCNNNPELAKKFQSAIFPGIQGGPLMHVIAAKAVAFKEALEPSFVDYQKQVLKNAKAMEKVLKQRGINIISGGTSNHLLLLDITNTGFSGKEAEAALGRANITVNKNSIPNDPRSPFVTSGLRIGSPAITTRGFKEKECELVANLLADVVFNCGDEKVENETAAKVLDLCDKFPVYK</sequence>
<organism>
    <name type="scientific">Francisella tularensis subsp. tularensis (strain WY96-3418)</name>
    <dbReference type="NCBI Taxonomy" id="418136"/>
    <lineage>
        <taxon>Bacteria</taxon>
        <taxon>Pseudomonadati</taxon>
        <taxon>Pseudomonadota</taxon>
        <taxon>Gammaproteobacteria</taxon>
        <taxon>Thiotrichales</taxon>
        <taxon>Francisellaceae</taxon>
        <taxon>Francisella</taxon>
    </lineage>
</organism>
<accession>A4IXD7</accession>
<evidence type="ECO:0000255" key="1">
    <source>
        <dbReference type="HAMAP-Rule" id="MF_00051"/>
    </source>
</evidence>
<keyword id="KW-0028">Amino-acid biosynthesis</keyword>
<keyword id="KW-0963">Cytoplasm</keyword>
<keyword id="KW-0554">One-carbon metabolism</keyword>
<keyword id="KW-0663">Pyridoxal phosphate</keyword>
<keyword id="KW-0808">Transferase</keyword>
<name>GLYA_FRATW</name>
<dbReference type="EC" id="2.1.2.1" evidence="1"/>
<dbReference type="EMBL" id="CP000608">
    <property type="protein sequence ID" value="ABO46589.1"/>
    <property type="molecule type" value="Genomic_DNA"/>
</dbReference>
<dbReference type="RefSeq" id="WP_003021543.1">
    <property type="nucleotide sequence ID" value="NC_009257.1"/>
</dbReference>
<dbReference type="SMR" id="A4IXD7"/>
<dbReference type="KEGG" id="ftw:FTW_0703"/>
<dbReference type="HOGENOM" id="CLU_022477_2_1_6"/>
<dbReference type="UniPathway" id="UPA00193"/>
<dbReference type="UniPathway" id="UPA00288">
    <property type="reaction ID" value="UER01023"/>
</dbReference>
<dbReference type="GO" id="GO:0005829">
    <property type="term" value="C:cytosol"/>
    <property type="evidence" value="ECO:0007669"/>
    <property type="project" value="TreeGrafter"/>
</dbReference>
<dbReference type="GO" id="GO:0004372">
    <property type="term" value="F:glycine hydroxymethyltransferase activity"/>
    <property type="evidence" value="ECO:0007669"/>
    <property type="project" value="UniProtKB-UniRule"/>
</dbReference>
<dbReference type="GO" id="GO:0030170">
    <property type="term" value="F:pyridoxal phosphate binding"/>
    <property type="evidence" value="ECO:0007669"/>
    <property type="project" value="UniProtKB-UniRule"/>
</dbReference>
<dbReference type="GO" id="GO:0019264">
    <property type="term" value="P:glycine biosynthetic process from serine"/>
    <property type="evidence" value="ECO:0007669"/>
    <property type="project" value="UniProtKB-UniRule"/>
</dbReference>
<dbReference type="GO" id="GO:0035999">
    <property type="term" value="P:tetrahydrofolate interconversion"/>
    <property type="evidence" value="ECO:0007669"/>
    <property type="project" value="UniProtKB-UniRule"/>
</dbReference>
<dbReference type="CDD" id="cd00378">
    <property type="entry name" value="SHMT"/>
    <property type="match status" value="1"/>
</dbReference>
<dbReference type="FunFam" id="3.40.640.10:FF:000001">
    <property type="entry name" value="Serine hydroxymethyltransferase"/>
    <property type="match status" value="1"/>
</dbReference>
<dbReference type="FunFam" id="3.90.1150.10:FF:000003">
    <property type="entry name" value="Serine hydroxymethyltransferase"/>
    <property type="match status" value="1"/>
</dbReference>
<dbReference type="Gene3D" id="3.90.1150.10">
    <property type="entry name" value="Aspartate Aminotransferase, domain 1"/>
    <property type="match status" value="1"/>
</dbReference>
<dbReference type="Gene3D" id="3.40.640.10">
    <property type="entry name" value="Type I PLP-dependent aspartate aminotransferase-like (Major domain)"/>
    <property type="match status" value="1"/>
</dbReference>
<dbReference type="HAMAP" id="MF_00051">
    <property type="entry name" value="SHMT"/>
    <property type="match status" value="1"/>
</dbReference>
<dbReference type="InterPro" id="IPR015424">
    <property type="entry name" value="PyrdxlP-dep_Trfase"/>
</dbReference>
<dbReference type="InterPro" id="IPR015421">
    <property type="entry name" value="PyrdxlP-dep_Trfase_major"/>
</dbReference>
<dbReference type="InterPro" id="IPR015422">
    <property type="entry name" value="PyrdxlP-dep_Trfase_small"/>
</dbReference>
<dbReference type="InterPro" id="IPR001085">
    <property type="entry name" value="Ser_HO-MeTrfase"/>
</dbReference>
<dbReference type="InterPro" id="IPR049943">
    <property type="entry name" value="Ser_HO-MeTrfase-like"/>
</dbReference>
<dbReference type="InterPro" id="IPR019798">
    <property type="entry name" value="Ser_HO-MeTrfase_PLP_BS"/>
</dbReference>
<dbReference type="InterPro" id="IPR039429">
    <property type="entry name" value="SHMT-like_dom"/>
</dbReference>
<dbReference type="NCBIfam" id="NF000586">
    <property type="entry name" value="PRK00011.1"/>
    <property type="match status" value="1"/>
</dbReference>
<dbReference type="PANTHER" id="PTHR11680">
    <property type="entry name" value="SERINE HYDROXYMETHYLTRANSFERASE"/>
    <property type="match status" value="1"/>
</dbReference>
<dbReference type="PANTHER" id="PTHR11680:SF50">
    <property type="entry name" value="SERINE HYDROXYMETHYLTRANSFERASE"/>
    <property type="match status" value="1"/>
</dbReference>
<dbReference type="Pfam" id="PF00464">
    <property type="entry name" value="SHMT"/>
    <property type="match status" value="1"/>
</dbReference>
<dbReference type="PIRSF" id="PIRSF000412">
    <property type="entry name" value="SHMT"/>
    <property type="match status" value="1"/>
</dbReference>
<dbReference type="SUPFAM" id="SSF53383">
    <property type="entry name" value="PLP-dependent transferases"/>
    <property type="match status" value="1"/>
</dbReference>
<dbReference type="PROSITE" id="PS00096">
    <property type="entry name" value="SHMT"/>
    <property type="match status" value="1"/>
</dbReference>
<comment type="function">
    <text evidence="1">Catalyzes the reversible interconversion of serine and glycine with tetrahydrofolate (THF) serving as the one-carbon carrier. This reaction serves as the major source of one-carbon groups required for the biosynthesis of purines, thymidylate, methionine, and other important biomolecules. Also exhibits THF-independent aldolase activity toward beta-hydroxyamino acids, producing glycine and aldehydes, via a retro-aldol mechanism.</text>
</comment>
<comment type="catalytic activity">
    <reaction evidence="1">
        <text>(6R)-5,10-methylene-5,6,7,8-tetrahydrofolate + glycine + H2O = (6S)-5,6,7,8-tetrahydrofolate + L-serine</text>
        <dbReference type="Rhea" id="RHEA:15481"/>
        <dbReference type="ChEBI" id="CHEBI:15377"/>
        <dbReference type="ChEBI" id="CHEBI:15636"/>
        <dbReference type="ChEBI" id="CHEBI:33384"/>
        <dbReference type="ChEBI" id="CHEBI:57305"/>
        <dbReference type="ChEBI" id="CHEBI:57453"/>
        <dbReference type="EC" id="2.1.2.1"/>
    </reaction>
</comment>
<comment type="cofactor">
    <cofactor evidence="1">
        <name>pyridoxal 5'-phosphate</name>
        <dbReference type="ChEBI" id="CHEBI:597326"/>
    </cofactor>
</comment>
<comment type="pathway">
    <text evidence="1">One-carbon metabolism; tetrahydrofolate interconversion.</text>
</comment>
<comment type="pathway">
    <text evidence="1">Amino-acid biosynthesis; glycine biosynthesis; glycine from L-serine: step 1/1.</text>
</comment>
<comment type="subunit">
    <text evidence="1">Homodimer.</text>
</comment>
<comment type="subcellular location">
    <subcellularLocation>
        <location evidence="1">Cytoplasm</location>
    </subcellularLocation>
</comment>
<comment type="similarity">
    <text evidence="1">Belongs to the SHMT family.</text>
</comment>
<gene>
    <name evidence="1" type="primary">glyA</name>
    <name type="ordered locus">FTW_0703</name>
</gene>
<reference key="1">
    <citation type="journal article" date="2007" name="PLoS ONE">
        <title>Complete genomic characterization of a pathogenic A.II strain of Francisella tularensis subspecies tularensis.</title>
        <authorList>
            <person name="Beckstrom-Sternberg S.M."/>
            <person name="Auerbach R.K."/>
            <person name="Godbole S."/>
            <person name="Pearson J.V."/>
            <person name="Beckstrom-Sternberg J.S."/>
            <person name="Deng Z."/>
            <person name="Munk C."/>
            <person name="Kubota K."/>
            <person name="Zhou Y."/>
            <person name="Bruce D."/>
            <person name="Noronha J."/>
            <person name="Scheuermann R.H."/>
            <person name="Wang A."/>
            <person name="Wei X."/>
            <person name="Wang J."/>
            <person name="Hao J."/>
            <person name="Wagner D.M."/>
            <person name="Brettin T.S."/>
            <person name="Brown N."/>
            <person name="Gilna P."/>
            <person name="Keim P.S."/>
        </authorList>
    </citation>
    <scope>NUCLEOTIDE SEQUENCE [LARGE SCALE GENOMIC DNA]</scope>
    <source>
        <strain>WY96-3418</strain>
    </source>
</reference>